<evidence type="ECO:0000255" key="1"/>
<evidence type="ECO:0000256" key="2">
    <source>
        <dbReference type="SAM" id="MobiDB-lite"/>
    </source>
</evidence>
<evidence type="ECO:0000269" key="3">
    <source>
    </source>
</evidence>
<evidence type="ECO:0000269" key="4">
    <source>
    </source>
</evidence>
<evidence type="ECO:0000269" key="5">
    <source>
    </source>
</evidence>
<evidence type="ECO:0000269" key="6">
    <source>
    </source>
</evidence>
<evidence type="ECO:0000305" key="7"/>
<comment type="function">
    <text evidence="3 6">Involved in rRNA processing. Required growth at elevated temperatures, resistance to hydroxyurea and for cell cycle progression.</text>
</comment>
<comment type="subcellular location">
    <subcellularLocation>
        <location evidence="4">Nucleus</location>
        <location evidence="4">Nucleolus</location>
    </subcellularLocation>
</comment>
<comment type="miscellaneous">
    <text evidence="5">Present with 2840 molecules/cell in log phase SD medium.</text>
</comment>
<comment type="similarity">
    <text evidence="7">Belongs to the EFG1 family.</text>
</comment>
<comment type="sequence caution" evidence="7">
    <conflict type="frameshift">
        <sequence resource="EMBL-CDS" id="CAA58894"/>
    </conflict>
</comment>
<comment type="sequence caution" evidence="7">
    <conflict type="frameshift">
        <sequence resource="EMBL-CDS" id="CAA97302"/>
    </conflict>
</comment>
<keyword id="KW-0175">Coiled coil</keyword>
<keyword id="KW-0539">Nucleus</keyword>
<keyword id="KW-1185">Reference proteome</keyword>
<keyword id="KW-0698">rRNA processing</keyword>
<organism>
    <name type="scientific">Saccharomyces cerevisiae (strain ATCC 204508 / S288c)</name>
    <name type="common">Baker's yeast</name>
    <dbReference type="NCBI Taxonomy" id="559292"/>
    <lineage>
        <taxon>Eukaryota</taxon>
        <taxon>Fungi</taxon>
        <taxon>Dikarya</taxon>
        <taxon>Ascomycota</taxon>
        <taxon>Saccharomycotina</taxon>
        <taxon>Saccharomycetes</taxon>
        <taxon>Saccharomycetales</taxon>
        <taxon>Saccharomycetaceae</taxon>
        <taxon>Saccharomyces</taxon>
    </lineage>
</organism>
<dbReference type="EMBL" id="X84098">
    <property type="protein sequence ID" value="CAA58894.1"/>
    <property type="status" value="ALT_FRAME"/>
    <property type="molecule type" value="Genomic_DNA"/>
</dbReference>
<dbReference type="EMBL" id="Z73057">
    <property type="protein sequence ID" value="CAA97302.1"/>
    <property type="status" value="ALT_FRAME"/>
    <property type="molecule type" value="Genomic_DNA"/>
</dbReference>
<dbReference type="EMBL" id="AY558513">
    <property type="protein sequence ID" value="AAS56839.1"/>
    <property type="molecule type" value="Genomic_DNA"/>
</dbReference>
<dbReference type="EMBL" id="BK006941">
    <property type="protein sequence ID" value="DAA08360.1"/>
    <property type="molecule type" value="Genomic_DNA"/>
</dbReference>
<dbReference type="PIR" id="S64605">
    <property type="entry name" value="S64605"/>
</dbReference>
<dbReference type="RefSeq" id="NP_076891.4">
    <property type="nucleotide sequence ID" value="NM_001184474.3"/>
</dbReference>
<dbReference type="SMR" id="Q3E705"/>
<dbReference type="BioGRID" id="33521">
    <property type="interactions" value="132"/>
</dbReference>
<dbReference type="FunCoup" id="Q3E705">
    <property type="interactions" value="211"/>
</dbReference>
<dbReference type="IntAct" id="Q3E705">
    <property type="interactions" value="4"/>
</dbReference>
<dbReference type="MINT" id="Q3E705"/>
<dbReference type="STRING" id="4932.YGR271C-A"/>
<dbReference type="iPTMnet" id="Q3E705"/>
<dbReference type="PaxDb" id="4932-YGR271C-A"/>
<dbReference type="PeptideAtlas" id="Q3E705"/>
<dbReference type="EnsemblFungi" id="YGR271C-A_mRNA">
    <property type="protein sequence ID" value="YGR271C-A"/>
    <property type="gene ID" value="YGR271C-A"/>
</dbReference>
<dbReference type="GeneID" id="853188"/>
<dbReference type="KEGG" id="sce:YGR271C-A"/>
<dbReference type="AGR" id="SGD:S000007608"/>
<dbReference type="SGD" id="S000007608">
    <property type="gene designation" value="EFG1"/>
</dbReference>
<dbReference type="VEuPathDB" id="FungiDB:YGR271C-A"/>
<dbReference type="eggNOG" id="KOG4484">
    <property type="taxonomic scope" value="Eukaryota"/>
</dbReference>
<dbReference type="HOGENOM" id="CLU_066912_2_0_1"/>
<dbReference type="InParanoid" id="Q3E705"/>
<dbReference type="OMA" id="NYVKYYP"/>
<dbReference type="OrthoDB" id="47732at2759"/>
<dbReference type="BioCyc" id="YEAST:G3O-31007-MONOMER"/>
<dbReference type="BioGRID-ORCS" id="853188">
    <property type="hits" value="0 hits in 10 CRISPR screens"/>
</dbReference>
<dbReference type="ChiTaRS" id="EFG1">
    <property type="organism name" value="yeast"/>
</dbReference>
<dbReference type="PRO" id="PR:Q3E705"/>
<dbReference type="Proteomes" id="UP000002311">
    <property type="component" value="Chromosome VII"/>
</dbReference>
<dbReference type="RNAct" id="Q3E705">
    <property type="molecule type" value="protein"/>
</dbReference>
<dbReference type="GO" id="GO:0005730">
    <property type="term" value="C:nucleolus"/>
    <property type="evidence" value="ECO:0000314"/>
    <property type="project" value="GO_Central"/>
</dbReference>
<dbReference type="GO" id="GO:0030688">
    <property type="term" value="C:preribosome, small subunit precursor"/>
    <property type="evidence" value="ECO:0000314"/>
    <property type="project" value="GO_Central"/>
</dbReference>
<dbReference type="GO" id="GO:0000462">
    <property type="term" value="P:maturation of SSU-rRNA from tricistronic rRNA transcript (SSU-rRNA, 5.8S rRNA, LSU-rRNA)"/>
    <property type="evidence" value="ECO:0000315"/>
    <property type="project" value="SGD"/>
</dbReference>
<dbReference type="GO" id="GO:0071027">
    <property type="term" value="P:nuclear RNA surveillance"/>
    <property type="evidence" value="ECO:0000315"/>
    <property type="project" value="SGD"/>
</dbReference>
<dbReference type="GO" id="GO:0000321">
    <property type="term" value="P:re-entry into mitotic cell cycle after pheromone arrest"/>
    <property type="evidence" value="ECO:0000315"/>
    <property type="project" value="SGD"/>
</dbReference>
<dbReference type="InterPro" id="IPR019310">
    <property type="entry name" value="Efg1"/>
</dbReference>
<dbReference type="InterPro" id="IPR050786">
    <property type="entry name" value="EFG1_rRNA-proc"/>
</dbReference>
<dbReference type="PANTHER" id="PTHR33911">
    <property type="entry name" value="RRNA-PROCESSING PROTEIN EFG1"/>
    <property type="match status" value="1"/>
</dbReference>
<dbReference type="PANTHER" id="PTHR33911:SF1">
    <property type="entry name" value="RRNA-PROCESSING PROTEIN EFG1"/>
    <property type="match status" value="1"/>
</dbReference>
<dbReference type="Pfam" id="PF10153">
    <property type="entry name" value="Efg1"/>
    <property type="match status" value="1"/>
</dbReference>
<sequence length="233" mass="27121">MAKLQRKRSKALGSSLEMSQIMDAGTNKIKRRIRDLERLLKKKKDILPSTVIIEKERNLQALRLELQNNELKNKIKANAKKYHMVRFFEKKKALRKYNRLLKKIKESGADDKDLQQKLRATKIELCYVINFPKTEKYIALYPNDTPSTDPKGVELTNLRREQFLKLVAERMDANTLNVSFEEILKGKKLDEDSIGLTLSPDKDHEDGSQVSPTQDRKELDQVVGEDEKDDFFE</sequence>
<protein>
    <recommendedName>
        <fullName>rRNA-processing protein EFG1</fullName>
    </recommendedName>
    <alternativeName>
        <fullName>Exit from G1 protein 1</fullName>
    </alternativeName>
</protein>
<reference key="1">
    <citation type="journal article" date="1997" name="Yeast">
        <title>The sequence of a 8 kb segment on the right arm of yeast chromosome VII identifies four new open reading frames and the genes for yTAFII145.</title>
        <authorList>
            <person name="Ruzzi M."/>
            <person name="Marconi A."/>
            <person name="Saliola M."/>
            <person name="Fabiani L."/>
            <person name="Montebove F."/>
            <person name="Frontali L."/>
        </authorList>
    </citation>
    <scope>NUCLEOTIDE SEQUENCE [GENOMIC DNA]</scope>
    <source>
        <strain>ATCC 204508 / S288c</strain>
    </source>
</reference>
<reference key="2">
    <citation type="journal article" date="1997" name="Nature">
        <title>The nucleotide sequence of Saccharomyces cerevisiae chromosome VII.</title>
        <authorList>
            <person name="Tettelin H."/>
            <person name="Agostoni-Carbone M.L."/>
            <person name="Albermann K."/>
            <person name="Albers M."/>
            <person name="Arroyo J."/>
            <person name="Backes U."/>
            <person name="Barreiros T."/>
            <person name="Bertani I."/>
            <person name="Bjourson A.J."/>
            <person name="Brueckner M."/>
            <person name="Bruschi C.V."/>
            <person name="Carignani G."/>
            <person name="Castagnoli L."/>
            <person name="Cerdan E."/>
            <person name="Clemente M.L."/>
            <person name="Coblenz A."/>
            <person name="Coglievina M."/>
            <person name="Coissac E."/>
            <person name="Defoor E."/>
            <person name="Del Bino S."/>
            <person name="Delius H."/>
            <person name="Delneri D."/>
            <person name="de Wergifosse P."/>
            <person name="Dujon B."/>
            <person name="Durand P."/>
            <person name="Entian K.-D."/>
            <person name="Eraso P."/>
            <person name="Escribano V."/>
            <person name="Fabiani L."/>
            <person name="Fartmann B."/>
            <person name="Feroli F."/>
            <person name="Feuermann M."/>
            <person name="Frontali L."/>
            <person name="Garcia-Gonzalez M."/>
            <person name="Garcia-Saez M.I."/>
            <person name="Goffeau A."/>
            <person name="Guerreiro P."/>
            <person name="Hani J."/>
            <person name="Hansen M."/>
            <person name="Hebling U."/>
            <person name="Hernandez K."/>
            <person name="Heumann K."/>
            <person name="Hilger F."/>
            <person name="Hofmann B."/>
            <person name="Indge K.J."/>
            <person name="James C.M."/>
            <person name="Klima R."/>
            <person name="Koetter P."/>
            <person name="Kramer B."/>
            <person name="Kramer W."/>
            <person name="Lauquin G."/>
            <person name="Leuther H."/>
            <person name="Louis E.J."/>
            <person name="Maillier E."/>
            <person name="Marconi A."/>
            <person name="Martegani E."/>
            <person name="Mazon M.J."/>
            <person name="Mazzoni C."/>
            <person name="McReynolds A.D.K."/>
            <person name="Melchioretto P."/>
            <person name="Mewes H.-W."/>
            <person name="Minenkova O."/>
            <person name="Mueller-Auer S."/>
            <person name="Nawrocki A."/>
            <person name="Netter P."/>
            <person name="Neu R."/>
            <person name="Nombela C."/>
            <person name="Oliver S.G."/>
            <person name="Panzeri L."/>
            <person name="Paoluzi S."/>
            <person name="Plevani P."/>
            <person name="Portetelle D."/>
            <person name="Portillo F."/>
            <person name="Potier S."/>
            <person name="Purnelle B."/>
            <person name="Rieger M."/>
            <person name="Riles L."/>
            <person name="Rinaldi T."/>
            <person name="Robben J."/>
            <person name="Rodrigues-Pousada C."/>
            <person name="Rodriguez-Belmonte E."/>
            <person name="Rodriguez-Torres A.M."/>
            <person name="Rose M."/>
            <person name="Ruzzi M."/>
            <person name="Saliola M."/>
            <person name="Sanchez-Perez M."/>
            <person name="Schaefer B."/>
            <person name="Schaefer M."/>
            <person name="Scharfe M."/>
            <person name="Schmidheini T."/>
            <person name="Schreer A."/>
            <person name="Skala J."/>
            <person name="Souciet J.-L."/>
            <person name="Steensma H.Y."/>
            <person name="Talla E."/>
            <person name="Thierry A."/>
            <person name="Vandenbol M."/>
            <person name="van der Aart Q.J.M."/>
            <person name="Van Dyck L."/>
            <person name="Vanoni M."/>
            <person name="Verhasselt P."/>
            <person name="Voet M."/>
            <person name="Volckaert G."/>
            <person name="Wambutt R."/>
            <person name="Watson M.D."/>
            <person name="Weber N."/>
            <person name="Wedler E."/>
            <person name="Wedler H."/>
            <person name="Wipfli P."/>
            <person name="Wolf K."/>
            <person name="Wright L.F."/>
            <person name="Zaccaria P."/>
            <person name="Zimmermann M."/>
            <person name="Zollner A."/>
            <person name="Kleine K."/>
        </authorList>
    </citation>
    <scope>NUCLEOTIDE SEQUENCE [LARGE SCALE GENOMIC DNA]</scope>
    <source>
        <strain>ATCC 204508 / S288c</strain>
    </source>
</reference>
<reference key="3">
    <citation type="journal article" date="2014" name="G3 (Bethesda)">
        <title>The reference genome sequence of Saccharomyces cerevisiae: Then and now.</title>
        <authorList>
            <person name="Engel S.R."/>
            <person name="Dietrich F.S."/>
            <person name="Fisk D.G."/>
            <person name="Binkley G."/>
            <person name="Balakrishnan R."/>
            <person name="Costanzo M.C."/>
            <person name="Dwight S.S."/>
            <person name="Hitz B.C."/>
            <person name="Karra K."/>
            <person name="Nash R.S."/>
            <person name="Weng S."/>
            <person name="Wong E.D."/>
            <person name="Lloyd P."/>
            <person name="Skrzypek M.S."/>
            <person name="Miyasato S.R."/>
            <person name="Simison M."/>
            <person name="Cherry J.M."/>
        </authorList>
    </citation>
    <scope>GENOME REANNOTATION</scope>
    <source>
        <strain>ATCC 204508 / S288c</strain>
    </source>
</reference>
<reference key="4">
    <citation type="journal article" date="2007" name="Genome Res.">
        <title>Approaching a complete repository of sequence-verified protein-encoding clones for Saccharomyces cerevisiae.</title>
        <authorList>
            <person name="Hu Y."/>
            <person name="Rolfs A."/>
            <person name="Bhullar B."/>
            <person name="Murthy T.V.S."/>
            <person name="Zhu C."/>
            <person name="Berger M.F."/>
            <person name="Camargo A.A."/>
            <person name="Kelley F."/>
            <person name="McCarron S."/>
            <person name="Jepson D."/>
            <person name="Richardson A."/>
            <person name="Raphael J."/>
            <person name="Moreira D."/>
            <person name="Taycher E."/>
            <person name="Zuo D."/>
            <person name="Mohr S."/>
            <person name="Kane M.F."/>
            <person name="Williamson J."/>
            <person name="Simpson A.J.G."/>
            <person name="Bulyk M.L."/>
            <person name="Harlow E."/>
            <person name="Marsischky G."/>
            <person name="Kolodner R.D."/>
            <person name="LaBaer J."/>
        </authorList>
    </citation>
    <scope>NUCLEOTIDE SEQUENCE [GENOMIC DNA] OF 1-152</scope>
    <source>
        <strain>ATCC 204508 / S288c</strain>
    </source>
</reference>
<reference key="5">
    <citation type="journal article" date="2003" name="Cell">
        <title>A panoramic view of yeast noncoding RNA processing.</title>
        <authorList>
            <person name="Peng W.-T."/>
            <person name="Robinson M.D."/>
            <person name="Mnaimneh S."/>
            <person name="Krogan N.J."/>
            <person name="Cagney G."/>
            <person name="Morris Q.D."/>
            <person name="Davierwala A.P."/>
            <person name="Grigull J."/>
            <person name="Yang X."/>
            <person name="Zhang W."/>
            <person name="Mitsakakis N."/>
            <person name="Ryan O.W."/>
            <person name="Datta N."/>
            <person name="Jojic V."/>
            <person name="Pal C."/>
            <person name="Canadien V."/>
            <person name="Richards D.P."/>
            <person name="Beattie B."/>
            <person name="Wu L.F."/>
            <person name="Altschuler S.J."/>
            <person name="Roweis S."/>
            <person name="Frey B.J."/>
            <person name="Emili A."/>
            <person name="Greenblatt J.F."/>
            <person name="Hughes T.R."/>
        </authorList>
    </citation>
    <scope>FUNCTION IN RRNA PROCESSING</scope>
</reference>
<reference key="6">
    <citation type="journal article" date="2003" name="Nature">
        <title>Global analysis of protein localization in budding yeast.</title>
        <authorList>
            <person name="Huh W.-K."/>
            <person name="Falvo J.V."/>
            <person name="Gerke L.C."/>
            <person name="Carroll A.S."/>
            <person name="Howson R.W."/>
            <person name="Weissman J.S."/>
            <person name="O'Shea E.K."/>
        </authorList>
    </citation>
    <scope>SUBCELLULAR LOCATION [LARGE SCALE ANALYSIS]</scope>
</reference>
<reference key="7">
    <citation type="journal article" date="2003" name="Nature">
        <title>Global analysis of protein expression in yeast.</title>
        <authorList>
            <person name="Ghaemmaghami S."/>
            <person name="Huh W.-K."/>
            <person name="Bower K."/>
            <person name="Howson R.W."/>
            <person name="Belle A."/>
            <person name="Dephoure N."/>
            <person name="O'Shea E.K."/>
            <person name="Weissman J.S."/>
        </authorList>
    </citation>
    <scope>LEVEL OF PROTEIN EXPRESSION [LARGE SCALE ANALYSIS]</scope>
</reference>
<reference key="8">
    <citation type="journal article" date="2006" name="Genome Res.">
        <title>Functional genomics of genes with small open reading frames (sORFs) in S. cerevisiae.</title>
        <authorList>
            <person name="Kastenmayer J.P."/>
            <person name="Ni L."/>
            <person name="Chu A."/>
            <person name="Kitchen L.E."/>
            <person name="Au W.-C."/>
            <person name="Yang H."/>
            <person name="Carter C.D."/>
            <person name="Wheeler D."/>
            <person name="Davis R.W."/>
            <person name="Boeke J.D."/>
            <person name="Snyder M.A."/>
            <person name="Basrai M.A."/>
        </authorList>
    </citation>
    <scope>FUNCTION</scope>
    <scope>IDENTIFICATION OF FRAMESHIFT</scope>
</reference>
<reference key="9">
    <citation type="journal article" date="2007" name="J. Proteome Res.">
        <title>Large-scale phosphorylation analysis of alpha-factor-arrested Saccharomyces cerevisiae.</title>
        <authorList>
            <person name="Li X."/>
            <person name="Gerber S.A."/>
            <person name="Rudner A.D."/>
            <person name="Beausoleil S.A."/>
            <person name="Haas W."/>
            <person name="Villen J."/>
            <person name="Elias J.E."/>
            <person name="Gygi S.P."/>
        </authorList>
    </citation>
    <scope>IDENTIFICATION BY MASS SPECTROMETRY [LARGE SCALE ANALYSIS]</scope>
    <source>
        <strain>ADR376</strain>
    </source>
</reference>
<reference key="10">
    <citation type="journal article" date="2007" name="Proc. Natl. Acad. Sci. U.S.A.">
        <title>Analysis of phosphorylation sites on proteins from Saccharomyces cerevisiae by electron transfer dissociation (ETD) mass spectrometry.</title>
        <authorList>
            <person name="Chi A."/>
            <person name="Huttenhower C."/>
            <person name="Geer L.Y."/>
            <person name="Coon J.J."/>
            <person name="Syka J.E.P."/>
            <person name="Bai D.L."/>
            <person name="Shabanowitz J."/>
            <person name="Burke D.J."/>
            <person name="Troyanskaya O.G."/>
            <person name="Hunt D.F."/>
        </authorList>
    </citation>
    <scope>IDENTIFICATION BY MASS SPECTROMETRY [LARGE SCALE ANALYSIS]</scope>
</reference>
<name>EFG1P_YEAST</name>
<feature type="chain" id="PRO_0000245390" description="rRNA-processing protein EFG1">
    <location>
        <begin position="1"/>
        <end position="233"/>
    </location>
</feature>
<feature type="region of interest" description="Disordered" evidence="2">
    <location>
        <begin position="194"/>
        <end position="233"/>
    </location>
</feature>
<feature type="coiled-coil region" evidence="1">
    <location>
        <begin position="26"/>
        <end position="109"/>
    </location>
</feature>
<feature type="compositionally biased region" description="Acidic residues" evidence="2">
    <location>
        <begin position="223"/>
        <end position="233"/>
    </location>
</feature>
<feature type="sequence conflict" description="In Ref. 4; AAS56839." evidence="7" ref="4">
    <original>G</original>
    <variation>A</variation>
    <location>
        <position position="152"/>
    </location>
</feature>
<accession>Q3E705</accession>
<accession>D6VV49</accession>
<accession>P53328</accession>
<proteinExistence type="evidence at protein level"/>
<gene>
    <name type="primary">EFG1</name>
    <name type="ordered locus">YGR271C-A</name>
    <name type="ORF">G9368</name>
    <name type="ORF">YGR272C</name>
</gene>